<comment type="function">
    <text evidence="1">Participates in chromosomal partition during cell division. May act via the formation of a condensin-like complex containing Smc and ScpB that pull DNA away from mid-cell into both cell halves.</text>
</comment>
<comment type="subunit">
    <text evidence="1">Component of a cohesin-like complex composed of ScpA, ScpB and the Smc homodimer, in which ScpA and ScpB bind to the head domain of Smc. The presence of the three proteins is required for the association of the complex with DNA.</text>
</comment>
<comment type="subcellular location">
    <subcellularLocation>
        <location evidence="1">Cytoplasm</location>
    </subcellularLocation>
    <text evidence="1">Associated with two foci at the outer edges of the nucleoid region in young cells, and at four foci within both cell halves in older cells.</text>
</comment>
<comment type="similarity">
    <text evidence="1">Belongs to the ScpA family.</text>
</comment>
<name>SCPA_BACCQ</name>
<dbReference type="EMBL" id="CP000227">
    <property type="protein sequence ID" value="ACM14276.1"/>
    <property type="molecule type" value="Genomic_DNA"/>
</dbReference>
<dbReference type="SMR" id="B9IWS1"/>
<dbReference type="KEGG" id="bcq:BCQ_3848"/>
<dbReference type="HOGENOM" id="CLU_038686_3_1_9"/>
<dbReference type="Proteomes" id="UP000000441">
    <property type="component" value="Chromosome"/>
</dbReference>
<dbReference type="GO" id="GO:0005737">
    <property type="term" value="C:cytoplasm"/>
    <property type="evidence" value="ECO:0007669"/>
    <property type="project" value="UniProtKB-SubCell"/>
</dbReference>
<dbReference type="GO" id="GO:0051301">
    <property type="term" value="P:cell division"/>
    <property type="evidence" value="ECO:0007669"/>
    <property type="project" value="UniProtKB-KW"/>
</dbReference>
<dbReference type="GO" id="GO:0007059">
    <property type="term" value="P:chromosome segregation"/>
    <property type="evidence" value="ECO:0007669"/>
    <property type="project" value="UniProtKB-UniRule"/>
</dbReference>
<dbReference type="GO" id="GO:0006260">
    <property type="term" value="P:DNA replication"/>
    <property type="evidence" value="ECO:0007669"/>
    <property type="project" value="UniProtKB-UniRule"/>
</dbReference>
<dbReference type="Gene3D" id="6.10.250.2410">
    <property type="match status" value="1"/>
</dbReference>
<dbReference type="Gene3D" id="1.10.10.580">
    <property type="entry name" value="Structural maintenance of chromosome 1. Chain E"/>
    <property type="match status" value="1"/>
</dbReference>
<dbReference type="HAMAP" id="MF_01805">
    <property type="entry name" value="ScpA"/>
    <property type="match status" value="1"/>
</dbReference>
<dbReference type="InterPro" id="IPR003768">
    <property type="entry name" value="ScpA"/>
</dbReference>
<dbReference type="InterPro" id="IPR023093">
    <property type="entry name" value="ScpA-like_C"/>
</dbReference>
<dbReference type="NCBIfam" id="NF000992">
    <property type="entry name" value="PRK00104.1-1"/>
    <property type="match status" value="1"/>
</dbReference>
<dbReference type="NCBIfam" id="NF000995">
    <property type="entry name" value="PRK00104.1-4"/>
    <property type="match status" value="1"/>
</dbReference>
<dbReference type="PANTHER" id="PTHR33969">
    <property type="entry name" value="SEGREGATION AND CONDENSATION PROTEIN A"/>
    <property type="match status" value="1"/>
</dbReference>
<dbReference type="PANTHER" id="PTHR33969:SF2">
    <property type="entry name" value="SEGREGATION AND CONDENSATION PROTEIN A"/>
    <property type="match status" value="1"/>
</dbReference>
<dbReference type="Pfam" id="PF02616">
    <property type="entry name" value="SMC_ScpA"/>
    <property type="match status" value="1"/>
</dbReference>
<evidence type="ECO:0000255" key="1">
    <source>
        <dbReference type="HAMAP-Rule" id="MF_01805"/>
    </source>
</evidence>
<proteinExistence type="inferred from homology"/>
<sequence>MQYNFKVEAFEGPLDLLLHLIHRYEIDIYNIPVAEITEQYLSYVHTMKELQLDVASEYLVMAATLLQIKSKMLLPKHEEDVLDNGDDFIDDPRQELMERLIEYKKYKQVATELKEREQERAQLYTRPPIDFTSLQQEEETSLPLDVTLYDMLAAFQKLMRRKKAKKPVTTRITRQEIPIEQRMTDILKLLEIQGGRQSFYDLFVDDEREIMVVTFLAVLELMKNQQIVIEQEHNFDEIFVSSYTKSA</sequence>
<gene>
    <name evidence="1" type="primary">scpA</name>
    <name type="ordered locus">BCQ_3848</name>
</gene>
<feature type="chain" id="PRO_1000187555" description="Segregation and condensation protein A">
    <location>
        <begin position="1"/>
        <end position="247"/>
    </location>
</feature>
<accession>B9IWS1</accession>
<organism>
    <name type="scientific">Bacillus cereus (strain Q1)</name>
    <dbReference type="NCBI Taxonomy" id="361100"/>
    <lineage>
        <taxon>Bacteria</taxon>
        <taxon>Bacillati</taxon>
        <taxon>Bacillota</taxon>
        <taxon>Bacilli</taxon>
        <taxon>Bacillales</taxon>
        <taxon>Bacillaceae</taxon>
        <taxon>Bacillus</taxon>
        <taxon>Bacillus cereus group</taxon>
    </lineage>
</organism>
<keyword id="KW-0131">Cell cycle</keyword>
<keyword id="KW-0132">Cell division</keyword>
<keyword id="KW-0159">Chromosome partition</keyword>
<keyword id="KW-0963">Cytoplasm</keyword>
<protein>
    <recommendedName>
        <fullName evidence="1">Segregation and condensation protein A</fullName>
    </recommendedName>
</protein>
<reference key="1">
    <citation type="journal article" date="2009" name="J. Bacteriol.">
        <title>Complete genome sequence of the extremophilic Bacillus cereus strain Q1 with industrial applications.</title>
        <authorList>
            <person name="Xiong Z."/>
            <person name="Jiang Y."/>
            <person name="Qi D."/>
            <person name="Lu H."/>
            <person name="Yang F."/>
            <person name="Yang J."/>
            <person name="Chen L."/>
            <person name="Sun L."/>
            <person name="Xu X."/>
            <person name="Xue Y."/>
            <person name="Zhu Y."/>
            <person name="Jin Q."/>
        </authorList>
    </citation>
    <scope>NUCLEOTIDE SEQUENCE [LARGE SCALE GENOMIC DNA]</scope>
    <source>
        <strain>Q1</strain>
    </source>
</reference>